<name>ATP8_CRIGR</name>
<evidence type="ECO:0000250" key="1">
    <source>
        <dbReference type="UniProtKB" id="P03928"/>
    </source>
</evidence>
<evidence type="ECO:0000250" key="2">
    <source>
        <dbReference type="UniProtKB" id="P03930"/>
    </source>
</evidence>
<evidence type="ECO:0000250" key="3">
    <source>
        <dbReference type="UniProtKB" id="P19483"/>
    </source>
</evidence>
<evidence type="ECO:0000255" key="4"/>
<evidence type="ECO:0000305" key="5"/>
<proteinExistence type="inferred from homology"/>
<geneLocation type="mitochondrion"/>
<dbReference type="EMBL" id="M14311">
    <property type="protein sequence ID" value="AAA68615.1"/>
    <property type="molecule type" value="Genomic_DNA"/>
</dbReference>
<dbReference type="PIR" id="A25188">
    <property type="entry name" value="A25188"/>
</dbReference>
<dbReference type="RefSeq" id="YP_537123.1">
    <property type="nucleotide sequence ID" value="NC_007936.1"/>
</dbReference>
<dbReference type="SMR" id="P14414"/>
<dbReference type="Ensembl" id="ENSCGRT00001000021.1">
    <property type="protein sequence ID" value="ENSCGRP00001000005.1"/>
    <property type="gene ID" value="ENSCGRG00001000021.1"/>
</dbReference>
<dbReference type="GeneID" id="3979187"/>
<dbReference type="KEGG" id="cge:3979187"/>
<dbReference type="CTD" id="4509"/>
<dbReference type="GeneTree" id="ENSGT00390000008771"/>
<dbReference type="OMA" id="LDTSTWF"/>
<dbReference type="Proteomes" id="UP000694386">
    <property type="component" value="Unplaced"/>
</dbReference>
<dbReference type="Proteomes" id="UP001108280">
    <property type="component" value="Unplaced"/>
</dbReference>
<dbReference type="GO" id="GO:0031966">
    <property type="term" value="C:mitochondrial membrane"/>
    <property type="evidence" value="ECO:0007669"/>
    <property type="project" value="UniProtKB-SubCell"/>
</dbReference>
<dbReference type="GO" id="GO:0045259">
    <property type="term" value="C:proton-transporting ATP synthase complex"/>
    <property type="evidence" value="ECO:0000250"/>
    <property type="project" value="UniProtKB"/>
</dbReference>
<dbReference type="GO" id="GO:0015078">
    <property type="term" value="F:proton transmembrane transporter activity"/>
    <property type="evidence" value="ECO:0007669"/>
    <property type="project" value="InterPro"/>
</dbReference>
<dbReference type="GO" id="GO:0015986">
    <property type="term" value="P:proton motive force-driven ATP synthesis"/>
    <property type="evidence" value="ECO:0007669"/>
    <property type="project" value="InterPro"/>
</dbReference>
<dbReference type="InterPro" id="IPR039017">
    <property type="entry name" value="ATP8_mammal"/>
</dbReference>
<dbReference type="InterPro" id="IPR001421">
    <property type="entry name" value="ATP8_metazoa"/>
</dbReference>
<dbReference type="PANTHER" id="PTHR13722">
    <property type="entry name" value="ATP SYNTHASE PROTEIN 8"/>
    <property type="match status" value="1"/>
</dbReference>
<dbReference type="PANTHER" id="PTHR13722:SF0">
    <property type="entry name" value="ATP SYNTHASE PROTEIN 8"/>
    <property type="match status" value="1"/>
</dbReference>
<dbReference type="Pfam" id="PF00895">
    <property type="entry name" value="ATP-synt_8"/>
    <property type="match status" value="1"/>
</dbReference>
<comment type="function">
    <text evidence="1 3">Subunit 8, of the mitochondrial membrane ATP synthase complex (F(1)F(0) ATP synthase or Complex V) that produces ATP from ADP in the presence of a proton gradient across the membrane which is generated by electron transport complexes of the respiratory chain. ATP synthase complex consist of a soluble F(1) head domain - the catalytic core - and a membrane F(1) domain - the membrane proton channel. These two domains are linked by a central stalk rotating inside the F(1) region and a stationary peripheral stalk. During catalysis, ATP synthesis in the catalytic domain of F(1) is coupled via a rotary mechanism of the central stalk subunits to proton translocation (By similarity). In vivo, can only synthesize ATP although its ATP hydrolase activity can be activated artificially in vitro (By similarity). Part of the complex F(0) domain (By similarity).</text>
</comment>
<comment type="subunit">
    <text evidence="1">Component of the ATP synthase complex composed at least of ATP5F1A/subunit alpha, ATP5F1B/subunit beta, ATP5MC1/subunit c (homooctomer), MT-ATP6/subunit a, MT-ATP8/subunit 8, ATP5ME/subunit e, ATP5MF/subunit f, ATP5MG/subunit g, ATP5MK/subunit k, ATP5MJ/subunit j, ATP5F1C/subunit gamma, ATP5F1D/subunit delta, ATP5F1E/subunit epsilon, ATP5PF/subunit F6, ATP5PB/subunit b, ATP5PD/subunit d, ATP5PO/subunit OSCP. ATP synthase complex consists of a soluble F(1) head domain (subunits alpha(3) and beta(3)) - the catalytic core - and a membrane F(0) domain - the membrane proton channel (subunits c, a, 8, e, f, g, k and j). These two domains are linked by a central stalk (subunits gamma, delta, and epsilon) rotating inside the F1 region and a stationary peripheral stalk (subunits F6, b, d, and OSCP). Interacts with PRICKLE3.</text>
</comment>
<comment type="subcellular location">
    <subcellularLocation>
        <location>Mitochondrion membrane</location>
        <topology>Single-pass membrane protein</topology>
    </subcellularLocation>
</comment>
<comment type="similarity">
    <text evidence="5">Belongs to the ATPase protein 8 family.</text>
</comment>
<gene>
    <name evidence="1" type="primary">MT-ATP8</name>
    <name type="synonym">ATP8</name>
    <name type="synonym">ATPASE8</name>
    <name type="synonym">MTATP8</name>
</gene>
<reference key="1">
    <citation type="journal article" date="1986" name="J. Biol. Chem.">
        <title>Mitochondrial DNA of two independent oligomycin-resistant Chinese hamster ovary cell lines contains a single nucleotide change in the ATPase 6 gene.</title>
        <authorList>
            <person name="Breen G.A.M."/>
            <person name="Miller D.L."/>
            <person name="Holmans P.L."/>
            <person name="Welch G."/>
        </authorList>
    </citation>
    <scope>NUCLEOTIDE SEQUENCE [GENOMIC DNA]</scope>
</reference>
<organism>
    <name type="scientific">Cricetulus griseus</name>
    <name type="common">Chinese hamster</name>
    <name type="synonym">Cricetulus barabensis griseus</name>
    <dbReference type="NCBI Taxonomy" id="10029"/>
    <lineage>
        <taxon>Eukaryota</taxon>
        <taxon>Metazoa</taxon>
        <taxon>Chordata</taxon>
        <taxon>Craniata</taxon>
        <taxon>Vertebrata</taxon>
        <taxon>Euteleostomi</taxon>
        <taxon>Mammalia</taxon>
        <taxon>Eutheria</taxon>
        <taxon>Euarchontoglires</taxon>
        <taxon>Glires</taxon>
        <taxon>Rodentia</taxon>
        <taxon>Myomorpha</taxon>
        <taxon>Muroidea</taxon>
        <taxon>Cricetidae</taxon>
        <taxon>Cricetinae</taxon>
        <taxon>Cricetulus</taxon>
    </lineage>
</organism>
<feature type="chain" id="PRO_0000195515" description="ATP synthase F(0) complex subunit 8">
    <location>
        <begin position="1"/>
        <end position="67"/>
    </location>
</feature>
<feature type="transmembrane region" description="Helical" evidence="4">
    <location>
        <begin position="8"/>
        <end position="24"/>
    </location>
</feature>
<feature type="modified residue" description="N6-acetyllysine; alternate" evidence="2">
    <location>
        <position position="54"/>
    </location>
</feature>
<feature type="modified residue" description="N6-succinyllysine; alternate" evidence="2">
    <location>
        <position position="54"/>
    </location>
</feature>
<feature type="modified residue" description="N6-acetyllysine" evidence="2">
    <location>
        <position position="57"/>
    </location>
</feature>
<sequence length="67" mass="7905">MPQLDTSTWFTTVLASSITLFILMQLKISFHDLHKKPSNKYLKLFKPTNPWEQKWTKIYSPLSLPQP</sequence>
<protein>
    <recommendedName>
        <fullName evidence="1">ATP synthase F(0) complex subunit 8</fullName>
    </recommendedName>
    <alternativeName>
        <fullName>A6L</fullName>
    </alternativeName>
    <alternativeName>
        <fullName>F-ATPase subunit 8</fullName>
    </alternativeName>
</protein>
<accession>P14414</accession>
<keyword id="KW-0007">Acetylation</keyword>
<keyword id="KW-0066">ATP synthesis</keyword>
<keyword id="KW-0138">CF(0)</keyword>
<keyword id="KW-0375">Hydrogen ion transport</keyword>
<keyword id="KW-0406">Ion transport</keyword>
<keyword id="KW-0472">Membrane</keyword>
<keyword id="KW-0496">Mitochondrion</keyword>
<keyword id="KW-0812">Transmembrane</keyword>
<keyword id="KW-1133">Transmembrane helix</keyword>
<keyword id="KW-0813">Transport</keyword>